<organism>
    <name type="scientific">Actinomyces viscosus</name>
    <dbReference type="NCBI Taxonomy" id="1656"/>
    <lineage>
        <taxon>Bacteria</taxon>
        <taxon>Bacillati</taxon>
        <taxon>Actinomycetota</taxon>
        <taxon>Actinomycetes</taxon>
        <taxon>Actinomycetales</taxon>
        <taxon>Actinomycetaceae</taxon>
        <taxon>Actinomyces</taxon>
    </lineage>
</organism>
<reference key="1">
    <citation type="journal article" date="1990" name="J. Bacteriol.">
        <title>Sequence homology between the subunits of two immunologically and functionally distinct types of fimbriae of Actinomyces spp.</title>
        <authorList>
            <person name="Yeung M.K."/>
            <person name="Cisar J.O."/>
        </authorList>
    </citation>
    <scope>NUCLEOTIDE SEQUENCE [GENOMIC DNA]</scope>
    <scope>PROTEIN SEQUENCE OF 31-56</scope>
    <source>
        <strain>T14V</strain>
    </source>
</reference>
<name>FM1_ACTVI</name>
<dbReference type="EMBL" id="M32067">
    <property type="protein sequence ID" value="AAA62572.1"/>
    <property type="molecule type" value="Genomic_DNA"/>
</dbReference>
<dbReference type="PIR" id="A35259">
    <property type="entry name" value="A35259"/>
</dbReference>
<dbReference type="PDB" id="3UXF">
    <property type="method" value="X-ray"/>
    <property type="resolution" value="1.60 A"/>
    <property type="chains" value="A=31-491"/>
</dbReference>
<dbReference type="PDBsum" id="3UXF"/>
<dbReference type="SMR" id="P18477"/>
<dbReference type="EvolutionaryTrace" id="P18477"/>
<dbReference type="GO" id="GO:0005576">
    <property type="term" value="C:extracellular region"/>
    <property type="evidence" value="ECO:0007669"/>
    <property type="project" value="UniProtKB-KW"/>
</dbReference>
<dbReference type="GO" id="GO:0009289">
    <property type="term" value="C:pilus"/>
    <property type="evidence" value="ECO:0007669"/>
    <property type="project" value="UniProtKB-SubCell"/>
</dbReference>
<dbReference type="GO" id="GO:0005975">
    <property type="term" value="P:carbohydrate metabolic process"/>
    <property type="evidence" value="ECO:0007669"/>
    <property type="project" value="UniProtKB-ARBA"/>
</dbReference>
<dbReference type="Gene3D" id="2.60.40.740">
    <property type="match status" value="1"/>
</dbReference>
<dbReference type="Gene3D" id="2.60.40.10">
    <property type="entry name" value="Immunoglobulins"/>
    <property type="match status" value="2"/>
</dbReference>
<dbReference type="InterPro" id="IPR026466">
    <property type="entry name" value="Fim_isopep_form_D2_dom"/>
</dbReference>
<dbReference type="InterPro" id="IPR048052">
    <property type="entry name" value="FM1-like"/>
</dbReference>
<dbReference type="InterPro" id="IPR032364">
    <property type="entry name" value="GramPos_pilinD1_N"/>
</dbReference>
<dbReference type="InterPro" id="IPR013783">
    <property type="entry name" value="Ig-like_fold"/>
</dbReference>
<dbReference type="InterPro" id="IPR019931">
    <property type="entry name" value="LPXTG_anchor"/>
</dbReference>
<dbReference type="InterPro" id="IPR041033">
    <property type="entry name" value="SpaA_PFL_dom_1"/>
</dbReference>
<dbReference type="InterPro" id="IPR006311">
    <property type="entry name" value="TAT_signal"/>
</dbReference>
<dbReference type="NCBIfam" id="NF033902">
    <property type="entry name" value="iso_D2_wall_anc"/>
    <property type="match status" value="1"/>
</dbReference>
<dbReference type="NCBIfam" id="TIGR01167">
    <property type="entry name" value="LPXTG_anchor"/>
    <property type="match status" value="1"/>
</dbReference>
<dbReference type="NCBIfam" id="TIGR04226">
    <property type="entry name" value="RrgB_K2N_iso_D2"/>
    <property type="match status" value="1"/>
</dbReference>
<dbReference type="Pfam" id="PF00746">
    <property type="entry name" value="Gram_pos_anchor"/>
    <property type="match status" value="1"/>
</dbReference>
<dbReference type="Pfam" id="PF16555">
    <property type="entry name" value="GramPos_pilinD1"/>
    <property type="match status" value="1"/>
</dbReference>
<dbReference type="Pfam" id="PF17802">
    <property type="entry name" value="SpaA"/>
    <property type="match status" value="1"/>
</dbReference>
<dbReference type="PROSITE" id="PS50847">
    <property type="entry name" value="GRAM_POS_ANCHORING"/>
    <property type="match status" value="1"/>
</dbReference>
<dbReference type="PROSITE" id="PS51318">
    <property type="entry name" value="TAT"/>
    <property type="match status" value="1"/>
</dbReference>
<accession>P18477</accession>
<comment type="function">
    <text>Major fimbrial subunit of A.viscosus.</text>
</comment>
<comment type="subcellular location">
    <subcellularLocation>
        <location evidence="1">Secreted</location>
        <location evidence="1">Cell wall</location>
        <topology evidence="1">Peptidoglycan-anchor</topology>
    </subcellularLocation>
    <subcellularLocation>
        <location>Fimbrium</location>
    </subcellularLocation>
</comment>
<keyword id="KW-0002">3D-structure</keyword>
<keyword id="KW-0134">Cell wall</keyword>
<keyword id="KW-0903">Direct protein sequencing</keyword>
<keyword id="KW-0281">Fimbrium</keyword>
<keyword id="KW-0572">Peptidoglycan-anchor</keyword>
<keyword id="KW-0964">Secreted</keyword>
<keyword id="KW-0732">Signal</keyword>
<evidence type="ECO:0000255" key="1">
    <source>
        <dbReference type="PROSITE-ProRule" id="PRU00477"/>
    </source>
</evidence>
<evidence type="ECO:0000269" key="2">
    <source>
    </source>
</evidence>
<evidence type="ECO:0007829" key="3">
    <source>
        <dbReference type="PDB" id="3UXF"/>
    </source>
</evidence>
<sequence>MHSLNTRRGLGLAAAMTLAAGALVAPTGAAAPADPNGSTIDPDAATTLTVHKCEQTDTNGVKEGTGNEDPQAECKPVSDVEFTITKLNVDLTTYDGWKTLADLKGDVVKAGALKSTTVQKITTGANGLASFTDAQTEVGAYLVSETRTPDKVIPAEDFVVTLPMTNPQDTAKWNYNVHVYPKNTLSGVDKQVTDKPAPGSGRDITYTITTSIPKVDYPGGARIKRYEVVDRLDKRIKKEALTPVVKIVGQNEVTLAETTDYTLITAEGKDHNWATIQLTEEGRRKASEARYNGNGETKLQVTLNAKFDAAVNLEGDLSNTAGLIPNDSPNFTWDPNNPGTTTDIPGIPTTPVLSKYGKVVLTKTGTDDLADKTKYNGAQFQVYECTKTASGATLRDSDPSTQTVDPLTIGGEKTFTTAGQGTVEINYLRANDYVNGAKKDQLTDEDYYCLVETKAPEGYNLQADPLPFRVLAEKAEKKAATEVTVTDIPKNAGFRLPLTGANGVIFLTIAGALLVAGGAVVAYANKRRHVAKH</sequence>
<feature type="signal peptide" evidence="2">
    <location>
        <begin position="1"/>
        <end position="30"/>
    </location>
</feature>
<feature type="chain" id="PRO_0000005601" description="Fimbrial subunit type 1">
    <location>
        <begin position="31"/>
        <end position="499"/>
    </location>
</feature>
<feature type="propeptide" id="PRO_0000005602" description="Removed by sortase" evidence="1">
    <location>
        <begin position="500"/>
        <end position="533"/>
    </location>
</feature>
<feature type="short sequence motif" description="LPXTG sorting signal" evidence="1">
    <location>
        <begin position="496"/>
        <end position="500"/>
    </location>
</feature>
<feature type="modified residue" description="Pentaglycyl murein peptidoglycan amidated threonine" evidence="1">
    <location>
        <position position="499"/>
    </location>
</feature>
<feature type="strand" evidence="3">
    <location>
        <begin position="37"/>
        <end position="39"/>
    </location>
</feature>
<feature type="strand" evidence="3">
    <location>
        <begin position="47"/>
        <end position="51"/>
    </location>
</feature>
<feature type="strand" evidence="3">
    <location>
        <begin position="81"/>
        <end position="88"/>
    </location>
</feature>
<feature type="helix" evidence="3">
    <location>
        <begin position="94"/>
        <end position="102"/>
    </location>
</feature>
<feature type="turn" evidence="3">
    <location>
        <begin position="103"/>
        <end position="105"/>
    </location>
</feature>
<feature type="helix" evidence="3">
    <location>
        <begin position="107"/>
        <end position="110"/>
    </location>
</feature>
<feature type="helix" evidence="3">
    <location>
        <begin position="111"/>
        <end position="113"/>
    </location>
</feature>
<feature type="strand" evidence="3">
    <location>
        <begin position="114"/>
        <end position="122"/>
    </location>
</feature>
<feature type="strand" evidence="3">
    <location>
        <begin position="128"/>
        <end position="131"/>
    </location>
</feature>
<feature type="turn" evidence="3">
    <location>
        <begin position="133"/>
        <end position="135"/>
    </location>
</feature>
<feature type="strand" evidence="3">
    <location>
        <begin position="138"/>
        <end position="147"/>
    </location>
</feature>
<feature type="strand" evidence="3">
    <location>
        <begin position="158"/>
        <end position="165"/>
    </location>
</feature>
<feature type="strand" evidence="3">
    <location>
        <begin position="173"/>
        <end position="179"/>
    </location>
</feature>
<feature type="strand" evidence="3">
    <location>
        <begin position="183"/>
        <end position="185"/>
    </location>
</feature>
<feature type="strand" evidence="3">
    <location>
        <begin position="188"/>
        <end position="193"/>
    </location>
</feature>
<feature type="strand" evidence="3">
    <location>
        <begin position="204"/>
        <end position="211"/>
    </location>
</feature>
<feature type="turn" evidence="3">
    <location>
        <begin position="217"/>
        <end position="220"/>
    </location>
</feature>
<feature type="strand" evidence="3">
    <location>
        <begin position="227"/>
        <end position="232"/>
    </location>
</feature>
<feature type="strand" evidence="3">
    <location>
        <begin position="244"/>
        <end position="251"/>
    </location>
</feature>
<feature type="turn" evidence="3">
    <location>
        <begin position="258"/>
        <end position="260"/>
    </location>
</feature>
<feature type="strand" evidence="3">
    <location>
        <begin position="261"/>
        <end position="267"/>
    </location>
</feature>
<feature type="strand" evidence="3">
    <location>
        <begin position="269"/>
        <end position="278"/>
    </location>
</feature>
<feature type="helix" evidence="3">
    <location>
        <begin position="280"/>
        <end position="291"/>
    </location>
</feature>
<feature type="strand" evidence="3">
    <location>
        <begin position="298"/>
        <end position="305"/>
    </location>
</feature>
<feature type="strand" evidence="3">
    <location>
        <begin position="314"/>
        <end position="324"/>
    </location>
</feature>
<feature type="strand" evidence="3">
    <location>
        <begin position="346"/>
        <end position="348"/>
    </location>
</feature>
<feature type="strand" evidence="3">
    <location>
        <begin position="352"/>
        <end position="365"/>
    </location>
</feature>
<feature type="helix" evidence="3">
    <location>
        <begin position="372"/>
        <end position="375"/>
    </location>
</feature>
<feature type="strand" evidence="3">
    <location>
        <begin position="379"/>
        <end position="388"/>
    </location>
</feature>
<feature type="strand" evidence="3">
    <location>
        <begin position="391"/>
        <end position="394"/>
    </location>
</feature>
<feature type="strand" evidence="3">
    <location>
        <begin position="401"/>
        <end position="403"/>
    </location>
</feature>
<feature type="turn" evidence="3">
    <location>
        <begin position="419"/>
        <end position="421"/>
    </location>
</feature>
<feature type="strand" evidence="3">
    <location>
        <begin position="422"/>
        <end position="429"/>
    </location>
</feature>
<feature type="strand" evidence="3">
    <location>
        <begin position="446"/>
        <end position="454"/>
    </location>
</feature>
<feature type="strand" evidence="3">
    <location>
        <begin position="466"/>
        <end position="468"/>
    </location>
</feature>
<feature type="helix" evidence="3">
    <location>
        <begin position="472"/>
        <end position="475"/>
    </location>
</feature>
<feature type="turn" evidence="3">
    <location>
        <begin position="476"/>
        <end position="478"/>
    </location>
</feature>
<feature type="strand" evidence="3">
    <location>
        <begin position="481"/>
        <end position="487"/>
    </location>
</feature>
<protein>
    <recommendedName>
        <fullName>Fimbrial subunit type 1</fullName>
    </recommendedName>
</protein>
<proteinExistence type="evidence at protein level"/>